<keyword id="KW-0249">Electron transport</keyword>
<keyword id="KW-0472">Membrane</keyword>
<keyword id="KW-0496">Mitochondrion</keyword>
<keyword id="KW-0999">Mitochondrion inner membrane</keyword>
<keyword id="KW-0520">NAD</keyword>
<keyword id="KW-0679">Respiratory chain</keyword>
<keyword id="KW-1278">Translocase</keyword>
<keyword id="KW-0812">Transmembrane</keyword>
<keyword id="KW-1133">Transmembrane helix</keyword>
<keyword id="KW-0813">Transport</keyword>
<keyword id="KW-0830">Ubiquinone</keyword>
<protein>
    <recommendedName>
        <fullName>NADH-ubiquinone oxidoreductase chain 4L</fullName>
        <ecNumber>7.1.1.2</ecNumber>
    </recommendedName>
    <alternativeName>
        <fullName>NADH dehydrogenase subunit 4L</fullName>
    </alternativeName>
</protein>
<feature type="chain" id="PRO_0000232857" description="NADH-ubiquinone oxidoreductase chain 4L">
    <location>
        <begin position="1"/>
        <end position="98"/>
    </location>
</feature>
<feature type="transmembrane region" description="Helical" evidence="3">
    <location>
        <begin position="1"/>
        <end position="21"/>
    </location>
</feature>
<feature type="transmembrane region" description="Helical" evidence="3">
    <location>
        <begin position="29"/>
        <end position="49"/>
    </location>
</feature>
<feature type="transmembrane region" description="Helical" evidence="3">
    <location>
        <begin position="61"/>
        <end position="81"/>
    </location>
</feature>
<geneLocation type="mitochondrion"/>
<evidence type="ECO:0000250" key="1">
    <source>
        <dbReference type="UniProtKB" id="P03901"/>
    </source>
</evidence>
<evidence type="ECO:0000250" key="2">
    <source>
        <dbReference type="UniProtKB" id="P03902"/>
    </source>
</evidence>
<evidence type="ECO:0000255" key="3"/>
<evidence type="ECO:0000305" key="4"/>
<accession>Q2I3G6</accession>
<proteinExistence type="inferred from homology"/>
<organism>
    <name type="scientific">Elephas maximus</name>
    <name type="common">Indian elephant</name>
    <dbReference type="NCBI Taxonomy" id="9783"/>
    <lineage>
        <taxon>Eukaryota</taxon>
        <taxon>Metazoa</taxon>
        <taxon>Chordata</taxon>
        <taxon>Craniata</taxon>
        <taxon>Vertebrata</taxon>
        <taxon>Euteleostomi</taxon>
        <taxon>Mammalia</taxon>
        <taxon>Eutheria</taxon>
        <taxon>Afrotheria</taxon>
        <taxon>Proboscidea</taxon>
        <taxon>Elephantidae</taxon>
        <taxon>Elephas</taxon>
    </lineage>
</organism>
<gene>
    <name type="primary">MT-ND4L</name>
    <name type="synonym">MTND4L</name>
    <name type="synonym">NADH4L</name>
    <name type="synonym">ND4L</name>
</gene>
<sequence>MPYIYMNITLAFVISLIGTLMYRSHLMSSLLCLEGMLLSLFTLNALLSLNMNFTLSTMVPLILLVFAACEAAVGLALLVMISNTYGLDYVQNLNLLQC</sequence>
<name>NU4LM_ELEMA</name>
<comment type="function">
    <text evidence="1">Core subunit of the mitochondrial membrane respiratory chain NADH dehydrogenase (Complex I) which catalyzes electron transfer from NADH through the respiratory chain, using ubiquinone as an electron acceptor. Part of the enzyme membrane arm which is embedded in the lipid bilayer and involved in proton translocation.</text>
</comment>
<comment type="catalytic activity">
    <reaction evidence="1">
        <text>a ubiquinone + NADH + 5 H(+)(in) = a ubiquinol + NAD(+) + 4 H(+)(out)</text>
        <dbReference type="Rhea" id="RHEA:29091"/>
        <dbReference type="Rhea" id="RHEA-COMP:9565"/>
        <dbReference type="Rhea" id="RHEA-COMP:9566"/>
        <dbReference type="ChEBI" id="CHEBI:15378"/>
        <dbReference type="ChEBI" id="CHEBI:16389"/>
        <dbReference type="ChEBI" id="CHEBI:17976"/>
        <dbReference type="ChEBI" id="CHEBI:57540"/>
        <dbReference type="ChEBI" id="CHEBI:57945"/>
        <dbReference type="EC" id="7.1.1.2"/>
    </reaction>
    <physiologicalReaction direction="left-to-right" evidence="1">
        <dbReference type="Rhea" id="RHEA:29092"/>
    </physiologicalReaction>
</comment>
<comment type="subunit">
    <text evidence="2">Core subunit of respiratory chain NADH dehydrogenase (Complex I) which is composed of 45 different subunits.</text>
</comment>
<comment type="subcellular location">
    <subcellularLocation>
        <location evidence="2">Mitochondrion inner membrane</location>
        <topology evidence="3">Multi-pass membrane protein</topology>
    </subcellularLocation>
</comment>
<comment type="similarity">
    <text evidence="4">Belongs to the complex I subunit 4L family.</text>
</comment>
<reference key="1">
    <citation type="journal article" date="2006" name="PLoS Biol.">
        <title>Complete mitochondrial genome and phylogeny of Pleistocene mammoth Mammuthus primigenius.</title>
        <authorList>
            <person name="Rogaev E.I."/>
            <person name="Moliaka Y.K."/>
            <person name="Malyarchuk B.A."/>
            <person name="Kondrashov F.A."/>
            <person name="Derenko M.V."/>
            <person name="Chumakov I."/>
            <person name="Grigorenko A.P."/>
        </authorList>
    </citation>
    <scope>NUCLEOTIDE SEQUENCE [GENOMIC DNA]</scope>
    <source>
        <tissue>Blood</tissue>
    </source>
</reference>
<dbReference type="EC" id="7.1.1.2"/>
<dbReference type="EMBL" id="DQ316068">
    <property type="protein sequence ID" value="ABC17899.1"/>
    <property type="molecule type" value="Genomic_DNA"/>
</dbReference>
<dbReference type="RefSeq" id="YP_626375.1">
    <property type="nucleotide sequence ID" value="NC_005129.2"/>
</dbReference>
<dbReference type="SMR" id="Q2I3G6"/>
<dbReference type="GeneID" id="2610371"/>
<dbReference type="CTD" id="4539"/>
<dbReference type="GO" id="GO:0005743">
    <property type="term" value="C:mitochondrial inner membrane"/>
    <property type="evidence" value="ECO:0000250"/>
    <property type="project" value="UniProtKB"/>
</dbReference>
<dbReference type="GO" id="GO:0045271">
    <property type="term" value="C:respiratory chain complex I"/>
    <property type="evidence" value="ECO:0000250"/>
    <property type="project" value="UniProtKB"/>
</dbReference>
<dbReference type="GO" id="GO:0008137">
    <property type="term" value="F:NADH dehydrogenase (ubiquinone) activity"/>
    <property type="evidence" value="ECO:0000250"/>
    <property type="project" value="UniProtKB"/>
</dbReference>
<dbReference type="GO" id="GO:0042773">
    <property type="term" value="P:ATP synthesis coupled electron transport"/>
    <property type="evidence" value="ECO:0007669"/>
    <property type="project" value="InterPro"/>
</dbReference>
<dbReference type="FunFam" id="1.10.287.3510:FF:000002">
    <property type="entry name" value="NADH-ubiquinone oxidoreductase chain 4L"/>
    <property type="match status" value="1"/>
</dbReference>
<dbReference type="Gene3D" id="1.10.287.3510">
    <property type="match status" value="1"/>
</dbReference>
<dbReference type="InterPro" id="IPR001133">
    <property type="entry name" value="NADH_UbQ_OxRdtase_chain4L/K"/>
</dbReference>
<dbReference type="InterPro" id="IPR039428">
    <property type="entry name" value="NUOK/Mnh_C1-like"/>
</dbReference>
<dbReference type="PANTHER" id="PTHR11434:SF0">
    <property type="entry name" value="NADH-UBIQUINONE OXIDOREDUCTASE CHAIN 4L"/>
    <property type="match status" value="1"/>
</dbReference>
<dbReference type="PANTHER" id="PTHR11434">
    <property type="entry name" value="NADH-UBIQUINONE OXIDOREDUCTASE SUBUNIT ND4L"/>
    <property type="match status" value="1"/>
</dbReference>
<dbReference type="Pfam" id="PF00420">
    <property type="entry name" value="Oxidored_q2"/>
    <property type="match status" value="1"/>
</dbReference>